<organism>
    <name type="scientific">Xylella fastidiosa (strain 9a5c)</name>
    <dbReference type="NCBI Taxonomy" id="160492"/>
    <lineage>
        <taxon>Bacteria</taxon>
        <taxon>Pseudomonadati</taxon>
        <taxon>Pseudomonadota</taxon>
        <taxon>Gammaproteobacteria</taxon>
        <taxon>Lysobacterales</taxon>
        <taxon>Lysobacteraceae</taxon>
        <taxon>Xylella</taxon>
    </lineage>
</organism>
<comment type="function">
    <text evidence="1">Hydrolyzes diadenosine 5',5'''-P1,P4-tetraphosphate to yield ADP.</text>
</comment>
<comment type="catalytic activity">
    <reaction>
        <text>P(1),P(4)-bis(5'-adenosyl) tetraphosphate + H2O = 2 ADP + 2 H(+)</text>
        <dbReference type="Rhea" id="RHEA:24252"/>
        <dbReference type="ChEBI" id="CHEBI:15377"/>
        <dbReference type="ChEBI" id="CHEBI:15378"/>
        <dbReference type="ChEBI" id="CHEBI:58141"/>
        <dbReference type="ChEBI" id="CHEBI:456216"/>
        <dbReference type="EC" id="3.6.1.41"/>
    </reaction>
</comment>
<comment type="similarity">
    <text evidence="3">Belongs to the Ap4A hydrolase family.</text>
</comment>
<gene>
    <name type="primary">apaH</name>
    <name type="ordered locus">XF_2150</name>
</gene>
<feature type="chain" id="PRO_0000198019" description="Bis(5'-nucleosyl)-tetraphosphatase, symmetrical">
    <location>
        <begin position="1"/>
        <end position="292"/>
    </location>
</feature>
<feature type="region of interest" description="Disordered" evidence="2">
    <location>
        <begin position="271"/>
        <end position="292"/>
    </location>
</feature>
<feature type="compositionally biased region" description="Basic residues" evidence="2">
    <location>
        <begin position="277"/>
        <end position="292"/>
    </location>
</feature>
<dbReference type="EC" id="3.6.1.41"/>
<dbReference type="EMBL" id="AE003849">
    <property type="protein sequence ID" value="AAF84949.1"/>
    <property type="molecule type" value="Genomic_DNA"/>
</dbReference>
<dbReference type="PIR" id="B82594">
    <property type="entry name" value="B82594"/>
</dbReference>
<dbReference type="RefSeq" id="WP_010894599.1">
    <property type="nucleotide sequence ID" value="NC_002488.3"/>
</dbReference>
<dbReference type="SMR" id="Q9PBJ4"/>
<dbReference type="STRING" id="160492.XF_2150"/>
<dbReference type="KEGG" id="xfa:XF_2150"/>
<dbReference type="eggNOG" id="COG0639">
    <property type="taxonomic scope" value="Bacteria"/>
</dbReference>
<dbReference type="HOGENOM" id="CLU_056184_0_0_6"/>
<dbReference type="Proteomes" id="UP000000812">
    <property type="component" value="Chromosome"/>
</dbReference>
<dbReference type="GO" id="GO:0008803">
    <property type="term" value="F:bis(5'-nucleosyl)-tetraphosphatase (symmetrical) activity"/>
    <property type="evidence" value="ECO:0007669"/>
    <property type="project" value="UniProtKB-UniRule"/>
</dbReference>
<dbReference type="CDD" id="cd07422">
    <property type="entry name" value="MPP_ApaH"/>
    <property type="match status" value="1"/>
</dbReference>
<dbReference type="Gene3D" id="3.60.21.10">
    <property type="match status" value="1"/>
</dbReference>
<dbReference type="HAMAP" id="MF_00199">
    <property type="entry name" value="ApaH"/>
    <property type="match status" value="1"/>
</dbReference>
<dbReference type="InterPro" id="IPR004617">
    <property type="entry name" value="ApaH"/>
</dbReference>
<dbReference type="InterPro" id="IPR004843">
    <property type="entry name" value="Calcineurin-like_PHP_ApaH"/>
</dbReference>
<dbReference type="InterPro" id="IPR029052">
    <property type="entry name" value="Metallo-depent_PP-like"/>
</dbReference>
<dbReference type="NCBIfam" id="TIGR00668">
    <property type="entry name" value="apaH"/>
    <property type="match status" value="1"/>
</dbReference>
<dbReference type="NCBIfam" id="NF001204">
    <property type="entry name" value="PRK00166.1"/>
    <property type="match status" value="1"/>
</dbReference>
<dbReference type="PANTHER" id="PTHR40942">
    <property type="match status" value="1"/>
</dbReference>
<dbReference type="PANTHER" id="PTHR40942:SF4">
    <property type="entry name" value="CYTOCHROME C5"/>
    <property type="match status" value="1"/>
</dbReference>
<dbReference type="Pfam" id="PF00149">
    <property type="entry name" value="Metallophos"/>
    <property type="match status" value="1"/>
</dbReference>
<dbReference type="PIRSF" id="PIRSF000903">
    <property type="entry name" value="B5n-ttraPtase_sm"/>
    <property type="match status" value="1"/>
</dbReference>
<dbReference type="SUPFAM" id="SSF56300">
    <property type="entry name" value="Metallo-dependent phosphatases"/>
    <property type="match status" value="1"/>
</dbReference>
<protein>
    <recommendedName>
        <fullName>Bis(5'-nucleosyl)-tetraphosphatase, symmetrical</fullName>
        <ecNumber>3.6.1.41</ecNumber>
    </recommendedName>
    <alternativeName>
        <fullName>Ap4A hydrolase</fullName>
    </alternativeName>
    <alternativeName>
        <fullName>Diadenosine 5',5'''-P1,P4-tetraphosphate pyrophosphohydrolase</fullName>
    </alternativeName>
    <alternativeName>
        <fullName>Diadenosine tetraphosphatase</fullName>
    </alternativeName>
</protein>
<name>APAH_XYLFA</name>
<proteinExistence type="inferred from homology"/>
<accession>Q9PBJ4</accession>
<sequence length="292" mass="33193">MSIWAIGDLQGCYDATQRLLENIRFDPSQDTLWFCGDLVNRGGQSLETLRLVYSLRSHSVVVLGNHDLSLLAIAVRSEEEQRKVNPDLLRIITAEDRDEILTWLRMQKLIHVDRTIGWMMVHAGLAPKWTTQMAEKLAHEVEQQLHGADYRNLLHSMYGDKPEWSPALSGCNRSRAIINVLTRMRYCTPRGRISTEDKGTPGTQTQGMYPWFEVPGRVERDLKIVCGHWSTLGLTITQGIHAIDTGAVWGGKLTALQIDTDELRLAQVHGLSIEHPRHTHTPRRQAKKHSKK</sequence>
<reference key="1">
    <citation type="journal article" date="2000" name="Nature">
        <title>The genome sequence of the plant pathogen Xylella fastidiosa.</title>
        <authorList>
            <person name="Simpson A.J.G."/>
            <person name="Reinach F.C."/>
            <person name="Arruda P."/>
            <person name="Abreu F.A."/>
            <person name="Acencio M."/>
            <person name="Alvarenga R."/>
            <person name="Alves L.M.C."/>
            <person name="Araya J.E."/>
            <person name="Baia G.S."/>
            <person name="Baptista C.S."/>
            <person name="Barros M.H."/>
            <person name="Bonaccorsi E.D."/>
            <person name="Bordin S."/>
            <person name="Bove J.M."/>
            <person name="Briones M.R.S."/>
            <person name="Bueno M.R.P."/>
            <person name="Camargo A.A."/>
            <person name="Camargo L.E.A."/>
            <person name="Carraro D.M."/>
            <person name="Carrer H."/>
            <person name="Colauto N.B."/>
            <person name="Colombo C."/>
            <person name="Costa F.F."/>
            <person name="Costa M.C.R."/>
            <person name="Costa-Neto C.M."/>
            <person name="Coutinho L.L."/>
            <person name="Cristofani M."/>
            <person name="Dias-Neto E."/>
            <person name="Docena C."/>
            <person name="El-Dorry H."/>
            <person name="Facincani A.P."/>
            <person name="Ferreira A.J.S."/>
            <person name="Ferreira V.C.A."/>
            <person name="Ferro J.A."/>
            <person name="Fraga J.S."/>
            <person name="Franca S.C."/>
            <person name="Franco M.C."/>
            <person name="Frohme M."/>
            <person name="Furlan L.R."/>
            <person name="Garnier M."/>
            <person name="Goldman G.H."/>
            <person name="Goldman M.H.S."/>
            <person name="Gomes S.L."/>
            <person name="Gruber A."/>
            <person name="Ho P.L."/>
            <person name="Hoheisel J.D."/>
            <person name="Junqueira M.L."/>
            <person name="Kemper E.L."/>
            <person name="Kitajima J.P."/>
            <person name="Krieger J.E."/>
            <person name="Kuramae E.E."/>
            <person name="Laigret F."/>
            <person name="Lambais M.R."/>
            <person name="Leite L.C.C."/>
            <person name="Lemos E.G.M."/>
            <person name="Lemos M.V.F."/>
            <person name="Lopes S.A."/>
            <person name="Lopes C.R."/>
            <person name="Machado J.A."/>
            <person name="Machado M.A."/>
            <person name="Madeira A.M.B.N."/>
            <person name="Madeira H.M.F."/>
            <person name="Marino C.L."/>
            <person name="Marques M.V."/>
            <person name="Martins E.A.L."/>
            <person name="Martins E.M.F."/>
            <person name="Matsukuma A.Y."/>
            <person name="Menck C.F.M."/>
            <person name="Miracca E.C."/>
            <person name="Miyaki C.Y."/>
            <person name="Monteiro-Vitorello C.B."/>
            <person name="Moon D.H."/>
            <person name="Nagai M.A."/>
            <person name="Nascimento A.L.T.O."/>
            <person name="Netto L.E.S."/>
            <person name="Nhani A. Jr."/>
            <person name="Nobrega F.G."/>
            <person name="Nunes L.R."/>
            <person name="Oliveira M.A."/>
            <person name="de Oliveira M.C."/>
            <person name="de Oliveira R.C."/>
            <person name="Palmieri D.A."/>
            <person name="Paris A."/>
            <person name="Peixoto B.R."/>
            <person name="Pereira G.A.G."/>
            <person name="Pereira H.A. Jr."/>
            <person name="Pesquero J.B."/>
            <person name="Quaggio R.B."/>
            <person name="Roberto P.G."/>
            <person name="Rodrigues V."/>
            <person name="de Rosa A.J.M."/>
            <person name="de Rosa V.E. Jr."/>
            <person name="de Sa R.G."/>
            <person name="Santelli R.V."/>
            <person name="Sawasaki H.E."/>
            <person name="da Silva A.C.R."/>
            <person name="da Silva A.M."/>
            <person name="da Silva F.R."/>
            <person name="Silva W.A. Jr."/>
            <person name="da Silveira J.F."/>
            <person name="Silvestri M.L.Z."/>
            <person name="Siqueira W.J."/>
            <person name="de Souza A.A."/>
            <person name="de Souza A.P."/>
            <person name="Terenzi M.F."/>
            <person name="Truffi D."/>
            <person name="Tsai S.M."/>
            <person name="Tsuhako M.H."/>
            <person name="Vallada H."/>
            <person name="Van Sluys M.A."/>
            <person name="Verjovski-Almeida S."/>
            <person name="Vettore A.L."/>
            <person name="Zago M.A."/>
            <person name="Zatz M."/>
            <person name="Meidanis J."/>
            <person name="Setubal J.C."/>
        </authorList>
    </citation>
    <scope>NUCLEOTIDE SEQUENCE [LARGE SCALE GENOMIC DNA]</scope>
    <source>
        <strain>9a5c</strain>
    </source>
</reference>
<evidence type="ECO:0000250" key="1"/>
<evidence type="ECO:0000256" key="2">
    <source>
        <dbReference type="SAM" id="MobiDB-lite"/>
    </source>
</evidence>
<evidence type="ECO:0000305" key="3"/>
<keyword id="KW-0378">Hydrolase</keyword>